<proteinExistence type="inferred from homology"/>
<keyword id="KW-0028">Amino-acid biosynthesis</keyword>
<keyword id="KW-0170">Cobalt</keyword>
<keyword id="KW-0220">Diaminopimelate biosynthesis</keyword>
<keyword id="KW-0378">Hydrolase</keyword>
<keyword id="KW-0457">Lysine biosynthesis</keyword>
<keyword id="KW-0479">Metal-binding</keyword>
<keyword id="KW-1185">Reference proteome</keyword>
<keyword id="KW-0862">Zinc</keyword>
<feature type="chain" id="PRO_0000375541" description="Succinyl-diaminopimelate desuccinylase">
    <location>
        <begin position="1"/>
        <end position="386"/>
    </location>
</feature>
<feature type="active site" evidence="1">
    <location>
        <position position="75"/>
    </location>
</feature>
<feature type="active site" description="Proton acceptor" evidence="1">
    <location>
        <position position="140"/>
    </location>
</feature>
<feature type="binding site" evidence="1">
    <location>
        <position position="73"/>
    </location>
    <ligand>
        <name>Zn(2+)</name>
        <dbReference type="ChEBI" id="CHEBI:29105"/>
        <label>1</label>
    </ligand>
</feature>
<feature type="binding site" evidence="1">
    <location>
        <position position="106"/>
    </location>
    <ligand>
        <name>Zn(2+)</name>
        <dbReference type="ChEBI" id="CHEBI:29105"/>
        <label>1</label>
    </ligand>
</feature>
<feature type="binding site" evidence="1">
    <location>
        <position position="106"/>
    </location>
    <ligand>
        <name>Zn(2+)</name>
        <dbReference type="ChEBI" id="CHEBI:29105"/>
        <label>2</label>
    </ligand>
</feature>
<feature type="binding site" evidence="1">
    <location>
        <position position="141"/>
    </location>
    <ligand>
        <name>Zn(2+)</name>
        <dbReference type="ChEBI" id="CHEBI:29105"/>
        <label>2</label>
    </ligand>
</feature>
<feature type="binding site" evidence="1">
    <location>
        <position position="169"/>
    </location>
    <ligand>
        <name>Zn(2+)</name>
        <dbReference type="ChEBI" id="CHEBI:29105"/>
        <label>1</label>
    </ligand>
</feature>
<feature type="binding site" evidence="1">
    <location>
        <position position="355"/>
    </location>
    <ligand>
        <name>Zn(2+)</name>
        <dbReference type="ChEBI" id="CHEBI:29105"/>
        <label>2</label>
    </ligand>
</feature>
<gene>
    <name evidence="1" type="primary">dapE</name>
    <name type="ordered locus">Daci_3614</name>
</gene>
<evidence type="ECO:0000255" key="1">
    <source>
        <dbReference type="HAMAP-Rule" id="MF_01690"/>
    </source>
</evidence>
<organism>
    <name type="scientific">Delftia acidovorans (strain DSM 14801 / SPH-1)</name>
    <dbReference type="NCBI Taxonomy" id="398578"/>
    <lineage>
        <taxon>Bacteria</taxon>
        <taxon>Pseudomonadati</taxon>
        <taxon>Pseudomonadota</taxon>
        <taxon>Betaproteobacteria</taxon>
        <taxon>Burkholderiales</taxon>
        <taxon>Comamonadaceae</taxon>
        <taxon>Delftia</taxon>
    </lineage>
</organism>
<sequence>MSRTLQLTEQLISLPSVTPEDAGCLELLADALQPMGFACERIDSGPDSFRVRNLWARRSGTGADRPVLVFAGHTDVVPTGPLEQWSSPPFVPTHRDGKLYGRGASDMKTSIAAFVVALEEFLAETPAPSFDIALLLTSDEEGPSVDGTKVVVELLRERGERLDWCIVGEPTSVERTGDMIKNGRRGTMSGRLTVKGIQGHIAYPQLARNPIHQALPALAELAATRWDEGNAFFPPTSWQISNMHGGTGASNVIPGHVTIDFNFRFCTESTAESLQQRVHAVLDHHGLEYELAWTIGGQPFLTTPGTLVNAVQAAIRAETGLETELSTTGGTSDGRFIAQICSQVVEVGPSNASIHKIDEHIVVADIEPIKNIYRRTLQELQRQQAV</sequence>
<protein>
    <recommendedName>
        <fullName evidence="1">Succinyl-diaminopimelate desuccinylase</fullName>
        <shortName evidence="1">SDAP desuccinylase</shortName>
        <ecNumber evidence="1">3.5.1.18</ecNumber>
    </recommendedName>
    <alternativeName>
        <fullName evidence="1">N-succinyl-LL-2,6-diaminoheptanedioate amidohydrolase</fullName>
    </alternativeName>
</protein>
<name>DAPE_DELAS</name>
<comment type="function">
    <text evidence="1">Catalyzes the hydrolysis of N-succinyl-L,L-diaminopimelic acid (SDAP), forming succinate and LL-2,6-diaminopimelate (DAP), an intermediate involved in the bacterial biosynthesis of lysine and meso-diaminopimelic acid, an essential component of bacterial cell walls.</text>
</comment>
<comment type="catalytic activity">
    <reaction evidence="1">
        <text>N-succinyl-(2S,6S)-2,6-diaminopimelate + H2O = (2S,6S)-2,6-diaminopimelate + succinate</text>
        <dbReference type="Rhea" id="RHEA:22608"/>
        <dbReference type="ChEBI" id="CHEBI:15377"/>
        <dbReference type="ChEBI" id="CHEBI:30031"/>
        <dbReference type="ChEBI" id="CHEBI:57609"/>
        <dbReference type="ChEBI" id="CHEBI:58087"/>
        <dbReference type="EC" id="3.5.1.18"/>
    </reaction>
</comment>
<comment type="cofactor">
    <cofactor evidence="1">
        <name>Zn(2+)</name>
        <dbReference type="ChEBI" id="CHEBI:29105"/>
    </cofactor>
    <cofactor evidence="1">
        <name>Co(2+)</name>
        <dbReference type="ChEBI" id="CHEBI:48828"/>
    </cofactor>
    <text evidence="1">Binds 2 Zn(2+) or Co(2+) ions per subunit.</text>
</comment>
<comment type="pathway">
    <text evidence="1">Amino-acid biosynthesis; L-lysine biosynthesis via DAP pathway; LL-2,6-diaminopimelate from (S)-tetrahydrodipicolinate (succinylase route): step 3/3.</text>
</comment>
<comment type="subunit">
    <text evidence="1">Homodimer.</text>
</comment>
<comment type="similarity">
    <text evidence="1">Belongs to the peptidase M20A family. DapE subfamily.</text>
</comment>
<reference key="1">
    <citation type="submission" date="2007-11" db="EMBL/GenBank/DDBJ databases">
        <title>Complete sequence of Delftia acidovorans DSM 14801 / SPH-1.</title>
        <authorList>
            <person name="Copeland A."/>
            <person name="Lucas S."/>
            <person name="Lapidus A."/>
            <person name="Barry K."/>
            <person name="Glavina del Rio T."/>
            <person name="Dalin E."/>
            <person name="Tice H."/>
            <person name="Pitluck S."/>
            <person name="Lowry S."/>
            <person name="Clum A."/>
            <person name="Schmutz J."/>
            <person name="Larimer F."/>
            <person name="Land M."/>
            <person name="Hauser L."/>
            <person name="Kyrpides N."/>
            <person name="Kim E."/>
            <person name="Schleheck D."/>
            <person name="Richardson P."/>
        </authorList>
    </citation>
    <scope>NUCLEOTIDE SEQUENCE [LARGE SCALE GENOMIC DNA]</scope>
    <source>
        <strain>DSM 14801 / SPH-1</strain>
    </source>
</reference>
<dbReference type="EC" id="3.5.1.18" evidence="1"/>
<dbReference type="EMBL" id="CP000884">
    <property type="protein sequence ID" value="ABX36248.1"/>
    <property type="molecule type" value="Genomic_DNA"/>
</dbReference>
<dbReference type="RefSeq" id="WP_012205448.1">
    <property type="nucleotide sequence ID" value="NC_010002.1"/>
</dbReference>
<dbReference type="SMR" id="A9BZY6"/>
<dbReference type="STRING" id="398578.Daci_3614"/>
<dbReference type="GeneID" id="24115670"/>
<dbReference type="KEGG" id="dac:Daci_3614"/>
<dbReference type="eggNOG" id="COG0624">
    <property type="taxonomic scope" value="Bacteria"/>
</dbReference>
<dbReference type="HOGENOM" id="CLU_021802_4_0_4"/>
<dbReference type="UniPathway" id="UPA00034">
    <property type="reaction ID" value="UER00021"/>
</dbReference>
<dbReference type="Proteomes" id="UP000000784">
    <property type="component" value="Chromosome"/>
</dbReference>
<dbReference type="GO" id="GO:0008777">
    <property type="term" value="F:acetylornithine deacetylase activity"/>
    <property type="evidence" value="ECO:0007669"/>
    <property type="project" value="TreeGrafter"/>
</dbReference>
<dbReference type="GO" id="GO:0050897">
    <property type="term" value="F:cobalt ion binding"/>
    <property type="evidence" value="ECO:0007669"/>
    <property type="project" value="UniProtKB-UniRule"/>
</dbReference>
<dbReference type="GO" id="GO:0009014">
    <property type="term" value="F:succinyl-diaminopimelate desuccinylase activity"/>
    <property type="evidence" value="ECO:0007669"/>
    <property type="project" value="UniProtKB-UniRule"/>
</dbReference>
<dbReference type="GO" id="GO:0008270">
    <property type="term" value="F:zinc ion binding"/>
    <property type="evidence" value="ECO:0007669"/>
    <property type="project" value="UniProtKB-UniRule"/>
</dbReference>
<dbReference type="GO" id="GO:0019877">
    <property type="term" value="P:diaminopimelate biosynthetic process"/>
    <property type="evidence" value="ECO:0007669"/>
    <property type="project" value="UniProtKB-UniRule"/>
</dbReference>
<dbReference type="GO" id="GO:0006526">
    <property type="term" value="P:L-arginine biosynthetic process"/>
    <property type="evidence" value="ECO:0007669"/>
    <property type="project" value="TreeGrafter"/>
</dbReference>
<dbReference type="GO" id="GO:0009089">
    <property type="term" value="P:lysine biosynthetic process via diaminopimelate"/>
    <property type="evidence" value="ECO:0007669"/>
    <property type="project" value="UniProtKB-UniRule"/>
</dbReference>
<dbReference type="CDD" id="cd03891">
    <property type="entry name" value="M20_DapE_proteobac"/>
    <property type="match status" value="1"/>
</dbReference>
<dbReference type="FunFam" id="3.30.70.360:FF:000011">
    <property type="entry name" value="Succinyl-diaminopimelate desuccinylase"/>
    <property type="match status" value="1"/>
</dbReference>
<dbReference type="Gene3D" id="3.40.630.10">
    <property type="entry name" value="Zn peptidases"/>
    <property type="match status" value="2"/>
</dbReference>
<dbReference type="HAMAP" id="MF_01690">
    <property type="entry name" value="DapE"/>
    <property type="match status" value="1"/>
</dbReference>
<dbReference type="InterPro" id="IPR036264">
    <property type="entry name" value="Bact_exopeptidase_dim_dom"/>
</dbReference>
<dbReference type="InterPro" id="IPR005941">
    <property type="entry name" value="DapE_proteobac"/>
</dbReference>
<dbReference type="InterPro" id="IPR002933">
    <property type="entry name" value="Peptidase_M20"/>
</dbReference>
<dbReference type="InterPro" id="IPR011650">
    <property type="entry name" value="Peptidase_M20_dimer"/>
</dbReference>
<dbReference type="InterPro" id="IPR050072">
    <property type="entry name" value="Peptidase_M20A"/>
</dbReference>
<dbReference type="NCBIfam" id="TIGR01246">
    <property type="entry name" value="dapE_proteo"/>
    <property type="match status" value="1"/>
</dbReference>
<dbReference type="NCBIfam" id="NF009557">
    <property type="entry name" value="PRK13009.1"/>
    <property type="match status" value="1"/>
</dbReference>
<dbReference type="PANTHER" id="PTHR43808">
    <property type="entry name" value="ACETYLORNITHINE DEACETYLASE"/>
    <property type="match status" value="1"/>
</dbReference>
<dbReference type="PANTHER" id="PTHR43808:SF31">
    <property type="entry name" value="N-ACETYL-L-CITRULLINE DEACETYLASE"/>
    <property type="match status" value="1"/>
</dbReference>
<dbReference type="Pfam" id="PF07687">
    <property type="entry name" value="M20_dimer"/>
    <property type="match status" value="1"/>
</dbReference>
<dbReference type="Pfam" id="PF01546">
    <property type="entry name" value="Peptidase_M20"/>
    <property type="match status" value="1"/>
</dbReference>
<dbReference type="SUPFAM" id="SSF55031">
    <property type="entry name" value="Bacterial exopeptidase dimerisation domain"/>
    <property type="match status" value="1"/>
</dbReference>
<dbReference type="SUPFAM" id="SSF53187">
    <property type="entry name" value="Zn-dependent exopeptidases"/>
    <property type="match status" value="1"/>
</dbReference>
<accession>A9BZY6</accession>